<reference key="1">
    <citation type="submission" date="2007-08" db="EMBL/GenBank/DDBJ databases">
        <authorList>
            <consortium name="The Vibrio harveyi Genome Sequencing Project"/>
            <person name="Bassler B."/>
            <person name="Clifton S.W."/>
            <person name="Fulton L."/>
            <person name="Delehaunty K."/>
            <person name="Fronick C."/>
            <person name="Harrison M."/>
            <person name="Markivic C."/>
            <person name="Fulton R."/>
            <person name="Tin-Wollam A.-M."/>
            <person name="Shah N."/>
            <person name="Pepin K."/>
            <person name="Nash W."/>
            <person name="Thiruvilangam P."/>
            <person name="Bhonagiri V."/>
            <person name="Waters C."/>
            <person name="Tu K.C."/>
            <person name="Irgon J."/>
            <person name="Wilson R.K."/>
        </authorList>
    </citation>
    <scope>NUCLEOTIDE SEQUENCE [LARGE SCALE GENOMIC DNA]</scope>
    <source>
        <strain>ATCC BAA-1116 / BB120</strain>
    </source>
</reference>
<sequence length="199" mass="22240">MRSFVLRARAAPTTSKALLEGVGNEAHTEILAHTMMNTMFVAQSHREDVVVHFVLESTKDFSRTITIRSNDITNIGGFHESTLIAAVARALDASVGMGKEQLREVEPGITVRTVSFERLVQELAEDHQLYMLDKKGEFVRDAEIGGNPCFLLTDHIPMPKKSYNSLKRLGTEKISLGPKMLFASQCVVLIHNELDIREF</sequence>
<name>TRMYL_VIBC1</name>
<protein>
    <recommendedName>
        <fullName evidence="1">Putative pseudouridine methyltransferase</fullName>
        <ecNumber evidence="1">2.1.1.-</ecNumber>
    </recommendedName>
</protein>
<gene>
    <name type="ordered locus">VIBHAR_06835</name>
</gene>
<comment type="subcellular location">
    <subcellularLocation>
        <location evidence="1">Cytoplasm</location>
    </subcellularLocation>
</comment>
<comment type="similarity">
    <text evidence="1">Belongs to the methyltransferase superfamily. TrmY family.</text>
</comment>
<accession>A7N7T1</accession>
<organism>
    <name type="scientific">Vibrio campbellii (strain ATCC BAA-1116)</name>
    <dbReference type="NCBI Taxonomy" id="2902295"/>
    <lineage>
        <taxon>Bacteria</taxon>
        <taxon>Pseudomonadati</taxon>
        <taxon>Pseudomonadota</taxon>
        <taxon>Gammaproteobacteria</taxon>
        <taxon>Vibrionales</taxon>
        <taxon>Vibrionaceae</taxon>
        <taxon>Vibrio</taxon>
    </lineage>
</organism>
<feature type="chain" id="PRO_1000025475" description="Putative pseudouridine methyltransferase">
    <location>
        <begin position="1"/>
        <end position="199"/>
    </location>
</feature>
<feature type="binding site" evidence="1">
    <location>
        <position position="132"/>
    </location>
    <ligand>
        <name>S-adenosyl-L-methionine</name>
        <dbReference type="ChEBI" id="CHEBI:59789"/>
    </ligand>
</feature>
<feature type="binding site" evidence="1">
    <location>
        <position position="186"/>
    </location>
    <ligand>
        <name>S-adenosyl-L-methionine</name>
        <dbReference type="ChEBI" id="CHEBI:59789"/>
    </ligand>
</feature>
<dbReference type="EC" id="2.1.1.-" evidence="1"/>
<dbReference type="EMBL" id="CP000790">
    <property type="protein sequence ID" value="ABU74710.1"/>
    <property type="molecule type" value="Genomic_DNA"/>
</dbReference>
<dbReference type="RefSeq" id="WP_012130190.1">
    <property type="nucleotide sequence ID" value="NC_009784.1"/>
</dbReference>
<dbReference type="SMR" id="A7N7T1"/>
<dbReference type="KEGG" id="vha:VIBHAR_06835"/>
<dbReference type="PATRIC" id="fig|338187.25.peg.3607"/>
<dbReference type="Proteomes" id="UP000008152">
    <property type="component" value="Chromosome II"/>
</dbReference>
<dbReference type="GO" id="GO:0005737">
    <property type="term" value="C:cytoplasm"/>
    <property type="evidence" value="ECO:0007669"/>
    <property type="project" value="UniProtKB-SubCell"/>
</dbReference>
<dbReference type="GO" id="GO:0008757">
    <property type="term" value="F:S-adenosylmethionine-dependent methyltransferase activity"/>
    <property type="evidence" value="ECO:0007669"/>
    <property type="project" value="UniProtKB-UniRule"/>
</dbReference>
<dbReference type="GO" id="GO:0008175">
    <property type="term" value="F:tRNA methyltransferase activity"/>
    <property type="evidence" value="ECO:0007669"/>
    <property type="project" value="InterPro"/>
</dbReference>
<dbReference type="GO" id="GO:0030488">
    <property type="term" value="P:tRNA methylation"/>
    <property type="evidence" value="ECO:0007669"/>
    <property type="project" value="TreeGrafter"/>
</dbReference>
<dbReference type="CDD" id="cd18087">
    <property type="entry name" value="TrmY-like"/>
    <property type="match status" value="1"/>
</dbReference>
<dbReference type="Gene3D" id="3.40.1280.10">
    <property type="match status" value="1"/>
</dbReference>
<dbReference type="HAMAP" id="MF_00587">
    <property type="entry name" value="tRNA_methyltr_TrmY"/>
    <property type="match status" value="1"/>
</dbReference>
<dbReference type="InterPro" id="IPR029028">
    <property type="entry name" value="Alpha/beta_knot_MTases"/>
</dbReference>
<dbReference type="InterPro" id="IPR007158">
    <property type="entry name" value="TrmY"/>
</dbReference>
<dbReference type="InterPro" id="IPR029026">
    <property type="entry name" value="tRNA_m1G_MTases_N"/>
</dbReference>
<dbReference type="NCBIfam" id="NF002560">
    <property type="entry name" value="PRK02135.1"/>
    <property type="match status" value="1"/>
</dbReference>
<dbReference type="PANTHER" id="PTHR40703">
    <property type="entry name" value="TRNA (PSEUDOURIDINE(54)-N(1))-METHYLTRANSFERASE"/>
    <property type="match status" value="1"/>
</dbReference>
<dbReference type="PANTHER" id="PTHR40703:SF1">
    <property type="entry name" value="TRNA (PSEUDOURIDINE(54)-N(1))-METHYLTRANSFERASE"/>
    <property type="match status" value="1"/>
</dbReference>
<dbReference type="Pfam" id="PF04013">
    <property type="entry name" value="Methyltrn_RNA_2"/>
    <property type="match status" value="1"/>
</dbReference>
<dbReference type="SUPFAM" id="SSF75217">
    <property type="entry name" value="alpha/beta knot"/>
    <property type="match status" value="1"/>
</dbReference>
<proteinExistence type="inferred from homology"/>
<keyword id="KW-0963">Cytoplasm</keyword>
<keyword id="KW-0489">Methyltransferase</keyword>
<keyword id="KW-0949">S-adenosyl-L-methionine</keyword>
<keyword id="KW-0808">Transferase</keyword>
<evidence type="ECO:0000255" key="1">
    <source>
        <dbReference type="HAMAP-Rule" id="MF_00587"/>
    </source>
</evidence>